<dbReference type="EMBL" id="BA000022">
    <property type="protein sequence ID" value="BAA10070.1"/>
    <property type="status" value="ALT_INIT"/>
    <property type="molecule type" value="Genomic_DNA"/>
</dbReference>
<dbReference type="PIR" id="S76092">
    <property type="entry name" value="S76092"/>
</dbReference>
<dbReference type="SMR" id="Q55569"/>
<dbReference type="FunCoup" id="Q55569">
    <property type="interactions" value="140"/>
</dbReference>
<dbReference type="IntAct" id="Q55569">
    <property type="interactions" value="1"/>
</dbReference>
<dbReference type="STRING" id="1148.gene:10499562"/>
<dbReference type="PaxDb" id="1148-1001446"/>
<dbReference type="EnsemblBacteria" id="BAA10070">
    <property type="protein sequence ID" value="BAA10070"/>
    <property type="gene ID" value="BAA10070"/>
</dbReference>
<dbReference type="KEGG" id="syn:slr0181"/>
<dbReference type="eggNOG" id="COG1381">
    <property type="taxonomic scope" value="Bacteria"/>
</dbReference>
<dbReference type="InParanoid" id="Q55569"/>
<dbReference type="PhylomeDB" id="Q55569"/>
<dbReference type="Proteomes" id="UP000001425">
    <property type="component" value="Chromosome"/>
</dbReference>
<dbReference type="GO" id="GO:0043590">
    <property type="term" value="C:bacterial nucleoid"/>
    <property type="evidence" value="ECO:0000318"/>
    <property type="project" value="GO_Central"/>
</dbReference>
<dbReference type="GO" id="GO:0006310">
    <property type="term" value="P:DNA recombination"/>
    <property type="evidence" value="ECO:0007669"/>
    <property type="project" value="UniProtKB-UniRule"/>
</dbReference>
<dbReference type="GO" id="GO:0006302">
    <property type="term" value="P:double-strand break repair"/>
    <property type="evidence" value="ECO:0000318"/>
    <property type="project" value="GO_Central"/>
</dbReference>
<dbReference type="Gene3D" id="2.40.50.140">
    <property type="entry name" value="Nucleic acid-binding proteins"/>
    <property type="match status" value="1"/>
</dbReference>
<dbReference type="Gene3D" id="1.20.1440.120">
    <property type="entry name" value="Recombination protein O, C-terminal domain"/>
    <property type="match status" value="1"/>
</dbReference>
<dbReference type="HAMAP" id="MF_00201">
    <property type="entry name" value="RecO"/>
    <property type="match status" value="1"/>
</dbReference>
<dbReference type="InterPro" id="IPR037278">
    <property type="entry name" value="ARFGAP/RecO"/>
</dbReference>
<dbReference type="InterPro" id="IPR022572">
    <property type="entry name" value="DNA_rep/recomb_RecO_N"/>
</dbReference>
<dbReference type="InterPro" id="IPR012340">
    <property type="entry name" value="NA-bd_OB-fold"/>
</dbReference>
<dbReference type="InterPro" id="IPR003717">
    <property type="entry name" value="RecO"/>
</dbReference>
<dbReference type="InterPro" id="IPR042242">
    <property type="entry name" value="RecO_C"/>
</dbReference>
<dbReference type="NCBIfam" id="TIGR00613">
    <property type="entry name" value="reco"/>
    <property type="match status" value="1"/>
</dbReference>
<dbReference type="PANTHER" id="PTHR33991">
    <property type="entry name" value="DNA REPAIR PROTEIN RECO"/>
    <property type="match status" value="1"/>
</dbReference>
<dbReference type="PANTHER" id="PTHR33991:SF1">
    <property type="entry name" value="DNA REPAIR PROTEIN RECO"/>
    <property type="match status" value="1"/>
</dbReference>
<dbReference type="Pfam" id="PF02565">
    <property type="entry name" value="RecO_C"/>
    <property type="match status" value="1"/>
</dbReference>
<dbReference type="Pfam" id="PF11967">
    <property type="entry name" value="RecO_N"/>
    <property type="match status" value="1"/>
</dbReference>
<dbReference type="SUPFAM" id="SSF57863">
    <property type="entry name" value="ArfGap/RecO-like zinc finger"/>
    <property type="match status" value="1"/>
</dbReference>
<dbReference type="SUPFAM" id="SSF50249">
    <property type="entry name" value="Nucleic acid-binding proteins"/>
    <property type="match status" value="1"/>
</dbReference>
<sequence length="271" mass="30633">MSRTYQTLGIVVKGMAFGESDRLVTIFSPEYGLIRAIAPGARKPKSSLRGRTELFVVNQFLLFAGKSLDRINQAETQYSYPGLGQNVCNLAAGQYLIELILALGTEASAQTSLYELFTEHLRRLETEATVENIYGHLAQALFHCLGAEGIAPQFHHCAITAQTISPNFYDRQWRVGFSPELGGIVDLRSSRDMGPIPQMRRLTAMELSLLQQLNQPALPDPQQYLPVIARKNFRLWDWVKAENLMRYYAQRQLGKSFRAAVLLDSMWEVDF</sequence>
<reference key="1">
    <citation type="journal article" date="1995" name="DNA Res.">
        <title>Sequence analysis of the genome of the unicellular cyanobacterium Synechocystis sp. strain PCC6803. I. Sequence features in the 1 Mb region from map positions 64% to 92% of the genome.</title>
        <authorList>
            <person name="Kaneko T."/>
            <person name="Tanaka A."/>
            <person name="Sato S."/>
            <person name="Kotani H."/>
            <person name="Sazuka T."/>
            <person name="Miyajima N."/>
            <person name="Sugiura M."/>
            <person name="Tabata S."/>
        </authorList>
    </citation>
    <scope>NUCLEOTIDE SEQUENCE [LARGE SCALE GENOMIC DNA]</scope>
    <source>
        <strain>ATCC 27184 / PCC 6803 / N-1</strain>
    </source>
</reference>
<reference key="2">
    <citation type="journal article" date="1996" name="DNA Res.">
        <title>Sequence analysis of the genome of the unicellular cyanobacterium Synechocystis sp. strain PCC6803. II. Sequence determination of the entire genome and assignment of potential protein-coding regions.</title>
        <authorList>
            <person name="Kaneko T."/>
            <person name="Sato S."/>
            <person name="Kotani H."/>
            <person name="Tanaka A."/>
            <person name="Asamizu E."/>
            <person name="Nakamura Y."/>
            <person name="Miyajima N."/>
            <person name="Hirosawa M."/>
            <person name="Sugiura M."/>
            <person name="Sasamoto S."/>
            <person name="Kimura T."/>
            <person name="Hosouchi T."/>
            <person name="Matsuno A."/>
            <person name="Muraki A."/>
            <person name="Nakazaki N."/>
            <person name="Naruo K."/>
            <person name="Okumura S."/>
            <person name="Shimpo S."/>
            <person name="Takeuchi C."/>
            <person name="Wada T."/>
            <person name="Watanabe A."/>
            <person name="Yamada M."/>
            <person name="Yasuda M."/>
            <person name="Tabata S."/>
        </authorList>
    </citation>
    <scope>NUCLEOTIDE SEQUENCE [LARGE SCALE GENOMIC DNA]</scope>
    <source>
        <strain>ATCC 27184 / PCC 6803 / Kazusa</strain>
    </source>
</reference>
<keyword id="KW-0227">DNA damage</keyword>
<keyword id="KW-0233">DNA recombination</keyword>
<keyword id="KW-0234">DNA repair</keyword>
<keyword id="KW-1185">Reference proteome</keyword>
<organism>
    <name type="scientific">Synechocystis sp. (strain ATCC 27184 / PCC 6803 / Kazusa)</name>
    <dbReference type="NCBI Taxonomy" id="1111708"/>
    <lineage>
        <taxon>Bacteria</taxon>
        <taxon>Bacillati</taxon>
        <taxon>Cyanobacteriota</taxon>
        <taxon>Cyanophyceae</taxon>
        <taxon>Synechococcales</taxon>
        <taxon>Merismopediaceae</taxon>
        <taxon>Synechocystis</taxon>
    </lineage>
</organism>
<name>RECO_SYNY3</name>
<comment type="function">
    <text evidence="1">Involved in DNA repair and RecF pathway recombination.</text>
</comment>
<comment type="similarity">
    <text evidence="2">Belongs to the RecO family.</text>
</comment>
<comment type="sequence caution" evidence="2">
    <conflict type="erroneous initiation">
        <sequence resource="EMBL-CDS" id="BAA10070"/>
    </conflict>
</comment>
<proteinExistence type="inferred from homology"/>
<protein>
    <recommendedName>
        <fullName>DNA repair protein RecO</fullName>
    </recommendedName>
    <alternativeName>
        <fullName>Recombination protein O</fullName>
    </alternativeName>
</protein>
<gene>
    <name type="primary">recO</name>
    <name type="ordered locus">slr0181</name>
</gene>
<evidence type="ECO:0000250" key="1"/>
<evidence type="ECO:0000305" key="2"/>
<feature type="chain" id="PRO_0000205019" description="DNA repair protein RecO">
    <location>
        <begin position="1"/>
        <end position="271"/>
    </location>
</feature>
<accession>Q55569</accession>